<proteinExistence type="evidence at transcript level"/>
<evidence type="ECO:0000250" key="1"/>
<evidence type="ECO:0000250" key="2">
    <source>
        <dbReference type="UniProtKB" id="P41159"/>
    </source>
</evidence>
<evidence type="ECO:0000250" key="3">
    <source>
        <dbReference type="UniProtKB" id="P41160"/>
    </source>
</evidence>
<evidence type="ECO:0000250" key="4">
    <source>
        <dbReference type="UniProtKB" id="P50596"/>
    </source>
</evidence>
<evidence type="ECO:0000305" key="5"/>
<comment type="function">
    <text evidence="2 3 4">Key player in the regulation of energy balance and body weight control. Once released into the circulation, has central and peripheral effects by binding LEPR, found in many tissues, which results in the activation of several major signaling pathways (By similarity). In the hypothalamus, acts as an appetite-regulating factor that induces a decrease in food intake and an increase in energy consumption by inducing anorexinogenic factors and suppressing orexigenic neuropeptides, also regulates bone mass and secretion of hypothalamo-pituitary-adrenal hormones. In the periphery, increases basal metabolism, influences reproductive function, regulates pancreatic beta-cell function and insulin secretion, is pro-angiogenic for endothelial cell and affects innate and adaptive immunity (By similarity). In the arcuate nucleus of the hypothalamus, activates by depolarization POMC neurons inducing FOS and SOCS3 expression to release anorexigenic peptides and inhibits by hyperpolarization NPY neurons inducing SOCS3 with a consequent reduction on release of orexigenic peptides (By similarity). In addition to its known satiety inducing effect, has a modulatory role in nutrient absorption. In the intestine, reduces glucose absorption by enterocytes by activating PKC and leading to a sequential activation of p38, PI3K and ERK signaling pathways which exerts an inhibitory effect on glucose absorption (By similarity). Acts as a growth factor on certain tissues, through the activation of different signaling pathways increases expression of genes involved in cell cycle regulation such as CCND1, via JAK2-STAT3 pathway, or VEGFA, via MAPK1/3 and PI3K-AKT1 pathways (By similarity). May also play an apoptotic role via JAK2-STAT3 pathway and up-regulation of BIRC5 expression. Pro-angiogenic, has mitogenic activity on vascular endothelial cells and plays a role in matrix remodeling by regulating the expression of matrix metalloproteinases (MMPs) and tissue inhibitors of metalloproteinases (TIMPs). In innate immunity, modulates the activity and function of neutrophils by increasing chemotaxis and the secretion of oxygen radicals. Increases phagocytosis by macrophages and enhances secretion of pro-inflammatory mediators. Increases cytotoxic ability of NK cells. Plays a pro-inflammatory role, in synergy with IL1B, by inducing NOS2 which promotes the production of IL6, IL8 and Prostaglandin E2, through a signaling pathway that involves JAK2, PI3K, MAP2K1/MEK1 and MAPK14/p38 (By similarity). In adaptive immunity, promotes the switch of memory T-cells towards T helper-1 cell immune responses (By similarity). Increases CD4(+)CD25(-) T-cell proliferation and reduces autophagy during TCR (T-cell receptor) stimulation, through MTOR signaling pathway activation and BCL2 up-regulation (By similarity).</text>
</comment>
<comment type="subcellular location">
    <subcellularLocation>
        <location evidence="2">Secreted</location>
    </subcellularLocation>
</comment>
<comment type="similarity">
    <text evidence="5">Belongs to the leptin family.</text>
</comment>
<gene>
    <name type="primary">LEP</name>
    <name type="synonym">OB</name>
</gene>
<keyword id="KW-1015">Disulfide bond</keyword>
<keyword id="KW-0550">Obesity</keyword>
<keyword id="KW-1185">Reference proteome</keyword>
<keyword id="KW-0964">Secreted</keyword>
<feature type="chain" id="PRO_0000160608" description="Leptin">
    <location>
        <begin position="1"/>
        <end position="146"/>
    </location>
</feature>
<feature type="disulfide bond" evidence="1">
    <location>
        <begin position="96"/>
        <end position="146"/>
    </location>
</feature>
<feature type="sequence conflict" description="In Ref. 2; AAB51033." evidence="5" ref="2">
    <original>L</original>
    <variation>H</variation>
    <location>
        <position position="65"/>
    </location>
</feature>
<feature type="sequence conflict" description="In Ref. 2; AAB51033." evidence="5" ref="2">
    <original>A</original>
    <variation>G</variation>
    <location>
        <position position="92"/>
    </location>
</feature>
<feature type="sequence conflict" description="In Ref. 2; AAB51033." evidence="5" ref="2">
    <original>V</original>
    <variation>L</variation>
    <location>
        <position position="124"/>
    </location>
</feature>
<accession>Q28603</accession>
<accession>P79212</accession>
<name>LEP_SHEEP</name>
<sequence>VPIRKVQDDTKTLIKTIVTRINDISHTQSVSSKQRVTGLDFIPGLHPLLSLSKMDQTLAIYQQILASLPSRNVIQISNDLENLRDLLHLLAASKSCPLPQVRALESLESLGVVLEASLYSTEVVALSRLQGSLQDMLRQLDLSPGC</sequence>
<organism>
    <name type="scientific">Ovis aries</name>
    <name type="common">Sheep</name>
    <dbReference type="NCBI Taxonomy" id="9940"/>
    <lineage>
        <taxon>Eukaryota</taxon>
        <taxon>Metazoa</taxon>
        <taxon>Chordata</taxon>
        <taxon>Craniata</taxon>
        <taxon>Vertebrata</taxon>
        <taxon>Euteleostomi</taxon>
        <taxon>Mammalia</taxon>
        <taxon>Eutheria</taxon>
        <taxon>Laurasiatheria</taxon>
        <taxon>Artiodactyla</taxon>
        <taxon>Ruminantia</taxon>
        <taxon>Pecora</taxon>
        <taxon>Bovidae</taxon>
        <taxon>Caprinae</taxon>
        <taxon>Ovis</taxon>
    </lineage>
</organism>
<dbReference type="EMBL" id="U84247">
    <property type="protein sequence ID" value="AAB41786.1"/>
    <property type="molecule type" value="mRNA"/>
</dbReference>
<dbReference type="EMBL" id="U62123">
    <property type="protein sequence ID" value="AAB51033.1"/>
    <property type="molecule type" value="mRNA"/>
</dbReference>
<dbReference type="SMR" id="Q28603"/>
<dbReference type="STRING" id="9940.ENSOARP00000002554"/>
<dbReference type="PaxDb" id="9940-ENSOARP00000002554"/>
<dbReference type="eggNOG" id="ENOG502S5K5">
    <property type="taxonomic scope" value="Eukaryota"/>
</dbReference>
<dbReference type="Proteomes" id="UP000002356">
    <property type="component" value="Unplaced"/>
</dbReference>
<dbReference type="GO" id="GO:0005615">
    <property type="term" value="C:extracellular space"/>
    <property type="evidence" value="ECO:0000250"/>
    <property type="project" value="HGNC-UCL"/>
</dbReference>
<dbReference type="GO" id="GO:0005179">
    <property type="term" value="F:hormone activity"/>
    <property type="evidence" value="ECO:0007669"/>
    <property type="project" value="InterPro"/>
</dbReference>
<dbReference type="GO" id="GO:0051428">
    <property type="term" value="F:peptide hormone receptor binding"/>
    <property type="evidence" value="ECO:0007669"/>
    <property type="project" value="TreeGrafter"/>
</dbReference>
<dbReference type="GO" id="GO:1990051">
    <property type="term" value="P:activation of protein kinase C activity"/>
    <property type="evidence" value="ECO:0000250"/>
    <property type="project" value="UniProtKB"/>
</dbReference>
<dbReference type="GO" id="GO:0008343">
    <property type="term" value="P:adult feeding behavior"/>
    <property type="evidence" value="ECO:0000250"/>
    <property type="project" value="HGNC-UCL"/>
</dbReference>
<dbReference type="GO" id="GO:0098868">
    <property type="term" value="P:bone growth"/>
    <property type="evidence" value="ECO:0000250"/>
    <property type="project" value="UniProtKB"/>
</dbReference>
<dbReference type="GO" id="GO:0044320">
    <property type="term" value="P:cellular response to leptin stimulus"/>
    <property type="evidence" value="ECO:0000250"/>
    <property type="project" value="UniProtKB"/>
</dbReference>
<dbReference type="GO" id="GO:0006112">
    <property type="term" value="P:energy reserve metabolic process"/>
    <property type="evidence" value="ECO:0007669"/>
    <property type="project" value="TreeGrafter"/>
</dbReference>
<dbReference type="GO" id="GO:0050892">
    <property type="term" value="P:intestinal absorption"/>
    <property type="evidence" value="ECO:0000250"/>
    <property type="project" value="UniProtKB"/>
</dbReference>
<dbReference type="GO" id="GO:0033210">
    <property type="term" value="P:leptin-mediated signaling pathway"/>
    <property type="evidence" value="ECO:0000250"/>
    <property type="project" value="UniProtKB"/>
</dbReference>
<dbReference type="GO" id="GO:0006629">
    <property type="term" value="P:lipid metabolic process"/>
    <property type="evidence" value="ECO:0007669"/>
    <property type="project" value="TreeGrafter"/>
</dbReference>
<dbReference type="GO" id="GO:0032099">
    <property type="term" value="P:negative regulation of appetite"/>
    <property type="evidence" value="ECO:0000250"/>
    <property type="project" value="HGNC-UCL"/>
</dbReference>
<dbReference type="GO" id="GO:0038108">
    <property type="term" value="P:negative regulation of appetite by leptin-mediated signaling pathway"/>
    <property type="evidence" value="ECO:0000250"/>
    <property type="project" value="UniProtKB"/>
</dbReference>
<dbReference type="GO" id="GO:0010507">
    <property type="term" value="P:negative regulation of autophagy"/>
    <property type="evidence" value="ECO:0000250"/>
    <property type="project" value="UniProtKB"/>
</dbReference>
<dbReference type="GO" id="GO:0046325">
    <property type="term" value="P:negative regulation of D-glucose import"/>
    <property type="evidence" value="ECO:0000250"/>
    <property type="project" value="UniProtKB"/>
</dbReference>
<dbReference type="GO" id="GO:0006909">
    <property type="term" value="P:phagocytosis"/>
    <property type="evidence" value="ECO:0000250"/>
    <property type="project" value="UniProtKB"/>
</dbReference>
<dbReference type="GO" id="GO:0032735">
    <property type="term" value="P:positive regulation of interleukin-12 production"/>
    <property type="evidence" value="ECO:0000250"/>
    <property type="project" value="UniProtKB"/>
</dbReference>
<dbReference type="GO" id="GO:0032755">
    <property type="term" value="P:positive regulation of interleukin-6 production"/>
    <property type="evidence" value="ECO:0000250"/>
    <property type="project" value="UniProtKB"/>
</dbReference>
<dbReference type="GO" id="GO:0032757">
    <property type="term" value="P:positive regulation of interleukin-8 production"/>
    <property type="evidence" value="ECO:0000250"/>
    <property type="project" value="UniProtKB"/>
</dbReference>
<dbReference type="GO" id="GO:0043410">
    <property type="term" value="P:positive regulation of MAPK cascade"/>
    <property type="evidence" value="ECO:0000250"/>
    <property type="project" value="UniProtKB"/>
</dbReference>
<dbReference type="GO" id="GO:1900745">
    <property type="term" value="P:positive regulation of p38MAPK cascade"/>
    <property type="evidence" value="ECO:0000250"/>
    <property type="project" value="UniProtKB"/>
</dbReference>
<dbReference type="GO" id="GO:0051897">
    <property type="term" value="P:positive regulation of phosphatidylinositol 3-kinase/protein kinase B signal transduction"/>
    <property type="evidence" value="ECO:0000250"/>
    <property type="project" value="UniProtKB"/>
</dbReference>
<dbReference type="GO" id="GO:0046427">
    <property type="term" value="P:positive regulation of receptor signaling pathway via JAK-STAT"/>
    <property type="evidence" value="ECO:0000250"/>
    <property type="project" value="UniProtKB"/>
</dbReference>
<dbReference type="GO" id="GO:0042102">
    <property type="term" value="P:positive regulation of T cell proliferation"/>
    <property type="evidence" value="ECO:0000250"/>
    <property type="project" value="UniProtKB"/>
</dbReference>
<dbReference type="GO" id="GO:0032008">
    <property type="term" value="P:positive regulation of TOR signaling"/>
    <property type="evidence" value="ECO:0000250"/>
    <property type="project" value="UniProtKB"/>
</dbReference>
<dbReference type="GO" id="GO:0032760">
    <property type="term" value="P:positive regulation of tumor necrosis factor production"/>
    <property type="evidence" value="ECO:0000250"/>
    <property type="project" value="UniProtKB"/>
</dbReference>
<dbReference type="GO" id="GO:0032310">
    <property type="term" value="P:prostaglandin secretion"/>
    <property type="evidence" value="ECO:0000250"/>
    <property type="project" value="UniProtKB"/>
</dbReference>
<dbReference type="GO" id="GO:0045765">
    <property type="term" value="P:regulation of angiogenesis"/>
    <property type="evidence" value="ECO:0000250"/>
    <property type="project" value="UniProtKB"/>
</dbReference>
<dbReference type="GO" id="GO:0046850">
    <property type="term" value="P:regulation of bone remodeling"/>
    <property type="evidence" value="ECO:0000250"/>
    <property type="project" value="UniProtKB"/>
</dbReference>
<dbReference type="GO" id="GO:0090335">
    <property type="term" value="P:regulation of brown fat cell differentiation"/>
    <property type="evidence" value="ECO:0000250"/>
    <property type="project" value="UniProtKB"/>
</dbReference>
<dbReference type="GO" id="GO:0051726">
    <property type="term" value="P:regulation of cell cycle"/>
    <property type="evidence" value="ECO:0000250"/>
    <property type="project" value="UniProtKB"/>
</dbReference>
<dbReference type="GO" id="GO:1900015">
    <property type="term" value="P:regulation of cytokine production involved in inflammatory response"/>
    <property type="evidence" value="ECO:0000250"/>
    <property type="project" value="UniProtKB"/>
</dbReference>
<dbReference type="GO" id="GO:0001936">
    <property type="term" value="P:regulation of endothelial cell proliferation"/>
    <property type="evidence" value="ECO:0000250"/>
    <property type="project" value="UniProtKB"/>
</dbReference>
<dbReference type="GO" id="GO:0032814">
    <property type="term" value="P:regulation of natural killer cell activation"/>
    <property type="evidence" value="ECO:0000250"/>
    <property type="project" value="UniProtKB"/>
</dbReference>
<dbReference type="GO" id="GO:0042269">
    <property type="term" value="P:regulation of natural killer cell mediated cytotoxicity"/>
    <property type="evidence" value="ECO:0000250"/>
    <property type="project" value="UniProtKB"/>
</dbReference>
<dbReference type="GO" id="GO:0032817">
    <property type="term" value="P:regulation of natural killer cell proliferation"/>
    <property type="evidence" value="ECO:0000250"/>
    <property type="project" value="UniProtKB"/>
</dbReference>
<dbReference type="GO" id="GO:0050999">
    <property type="term" value="P:regulation of nitric-oxide synthase activity"/>
    <property type="evidence" value="ECO:0000250"/>
    <property type="project" value="UniProtKB"/>
</dbReference>
<dbReference type="GO" id="GO:0032868">
    <property type="term" value="P:response to insulin"/>
    <property type="evidence" value="ECO:0007669"/>
    <property type="project" value="TreeGrafter"/>
</dbReference>
<dbReference type="GO" id="GO:0019953">
    <property type="term" value="P:sexual reproduction"/>
    <property type="evidence" value="ECO:0000250"/>
    <property type="project" value="UniProtKB"/>
</dbReference>
<dbReference type="GO" id="GO:0030217">
    <property type="term" value="P:T cell differentiation"/>
    <property type="evidence" value="ECO:0000250"/>
    <property type="project" value="UniProtKB"/>
</dbReference>
<dbReference type="FunFam" id="1.20.1250.10:FF:000008">
    <property type="entry name" value="Leptin"/>
    <property type="match status" value="1"/>
</dbReference>
<dbReference type="Gene3D" id="1.20.1250.10">
    <property type="match status" value="1"/>
</dbReference>
<dbReference type="InterPro" id="IPR009079">
    <property type="entry name" value="4_helix_cytokine-like_core"/>
</dbReference>
<dbReference type="InterPro" id="IPR000065">
    <property type="entry name" value="Leptin"/>
</dbReference>
<dbReference type="PANTHER" id="PTHR11724">
    <property type="entry name" value="LEPTIN"/>
    <property type="match status" value="1"/>
</dbReference>
<dbReference type="PANTHER" id="PTHR11724:SF1">
    <property type="entry name" value="LEPTIN"/>
    <property type="match status" value="1"/>
</dbReference>
<dbReference type="Pfam" id="PF02024">
    <property type="entry name" value="Leptin"/>
    <property type="match status" value="1"/>
</dbReference>
<dbReference type="PIRSF" id="PIRSF001837">
    <property type="entry name" value="Leptin"/>
    <property type="match status" value="1"/>
</dbReference>
<dbReference type="PRINTS" id="PR00495">
    <property type="entry name" value="LEPTIN"/>
</dbReference>
<dbReference type="SUPFAM" id="SSF47266">
    <property type="entry name" value="4-helical cytokines"/>
    <property type="match status" value="1"/>
</dbReference>
<reference key="1">
    <citation type="submission" date="1997-01" db="EMBL/GenBank/DDBJ databases">
        <authorList>
            <person name="Simmons J.M."/>
            <person name="Dyer C.J."/>
            <person name="Keisler D.H."/>
        </authorList>
    </citation>
    <scope>NUCLEOTIDE SEQUENCE [MRNA]</scope>
    <source>
        <tissue>Adipose tissue</tissue>
    </source>
</reference>
<reference key="2">
    <citation type="journal article" date="1997" name="Domest. Anim. Endocrinol.">
        <title>cDNA cloning and tissue-specific gene expression of ovine leptin, NPY-Y1 receptor, and NPY-Y2 receptor.</title>
        <authorList>
            <person name="Dyer C.J."/>
            <person name="Simmons J.M."/>
            <person name="Matteri R.L."/>
            <person name="Keisler D.H."/>
        </authorList>
    </citation>
    <scope>NUCLEOTIDE SEQUENCE [MRNA] OF 9-125</scope>
    <source>
        <tissue>Adipose tissue</tissue>
    </source>
</reference>
<protein>
    <recommendedName>
        <fullName>Leptin</fullName>
    </recommendedName>
    <alternativeName>
        <fullName>Obesity factor</fullName>
    </alternativeName>
</protein>